<comment type="function">
    <text evidence="1">Involved in the gluconeogenesis. Catalyzes stereospecifically the conversion of dihydroxyacetone phosphate (DHAP) to D-glyceraldehyde-3-phosphate (G3P).</text>
</comment>
<comment type="catalytic activity">
    <reaction evidence="1">
        <text>D-glyceraldehyde 3-phosphate = dihydroxyacetone phosphate</text>
        <dbReference type="Rhea" id="RHEA:18585"/>
        <dbReference type="ChEBI" id="CHEBI:57642"/>
        <dbReference type="ChEBI" id="CHEBI:59776"/>
        <dbReference type="EC" id="5.3.1.1"/>
    </reaction>
</comment>
<comment type="pathway">
    <text evidence="1">Carbohydrate biosynthesis; gluconeogenesis.</text>
</comment>
<comment type="pathway">
    <text evidence="1">Carbohydrate degradation; glycolysis; D-glyceraldehyde 3-phosphate from glycerone phosphate: step 1/1.</text>
</comment>
<comment type="subunit">
    <text evidence="1">Homodimer.</text>
</comment>
<comment type="subcellular location">
    <subcellularLocation>
        <location evidence="1">Cytoplasm</location>
    </subcellularLocation>
</comment>
<comment type="similarity">
    <text evidence="1">Belongs to the triosephosphate isomerase family.</text>
</comment>
<name>TPIS_CAMC5</name>
<evidence type="ECO:0000255" key="1">
    <source>
        <dbReference type="HAMAP-Rule" id="MF_00147"/>
    </source>
</evidence>
<feature type="chain" id="PRO_1000009841" description="Triosephosphate isomerase">
    <location>
        <begin position="1"/>
        <end position="229"/>
    </location>
</feature>
<feature type="active site" description="Electrophile" evidence="1">
    <location>
        <position position="85"/>
    </location>
</feature>
<feature type="active site" description="Proton acceptor" evidence="1">
    <location>
        <position position="152"/>
    </location>
</feature>
<feature type="binding site" evidence="1">
    <location>
        <begin position="6"/>
        <end position="8"/>
    </location>
    <ligand>
        <name>substrate</name>
    </ligand>
</feature>
<feature type="binding site" evidence="1">
    <location>
        <position position="158"/>
    </location>
    <ligand>
        <name>substrate</name>
    </ligand>
</feature>
<feature type="binding site" evidence="1">
    <location>
        <position position="188"/>
    </location>
    <ligand>
        <name>substrate</name>
    </ligand>
</feature>
<protein>
    <recommendedName>
        <fullName evidence="1">Triosephosphate isomerase</fullName>
        <shortName evidence="1">TIM</shortName>
        <shortName evidence="1">TPI</shortName>
        <ecNumber evidence="1">5.3.1.1</ecNumber>
    </recommendedName>
    <alternativeName>
        <fullName evidence="1">Triose-phosphate isomerase</fullName>
    </alternativeName>
</protein>
<dbReference type="EC" id="5.3.1.1" evidence="1"/>
<dbReference type="EMBL" id="CP000767">
    <property type="protein sequence ID" value="EAU00949.1"/>
    <property type="molecule type" value="Genomic_DNA"/>
</dbReference>
<dbReference type="RefSeq" id="WP_011991880.1">
    <property type="nucleotide sequence ID" value="NC_009715.2"/>
</dbReference>
<dbReference type="SMR" id="A7GWT2"/>
<dbReference type="STRING" id="360105.CCV52592_1247"/>
<dbReference type="KEGG" id="ccv:CCV52592_1247"/>
<dbReference type="HOGENOM" id="CLU_024251_2_3_7"/>
<dbReference type="OrthoDB" id="9809429at2"/>
<dbReference type="UniPathway" id="UPA00109">
    <property type="reaction ID" value="UER00189"/>
</dbReference>
<dbReference type="UniPathway" id="UPA00138"/>
<dbReference type="Proteomes" id="UP000006380">
    <property type="component" value="Chromosome"/>
</dbReference>
<dbReference type="GO" id="GO:0005829">
    <property type="term" value="C:cytosol"/>
    <property type="evidence" value="ECO:0007669"/>
    <property type="project" value="TreeGrafter"/>
</dbReference>
<dbReference type="GO" id="GO:0004807">
    <property type="term" value="F:triose-phosphate isomerase activity"/>
    <property type="evidence" value="ECO:0007669"/>
    <property type="project" value="UniProtKB-UniRule"/>
</dbReference>
<dbReference type="GO" id="GO:0006094">
    <property type="term" value="P:gluconeogenesis"/>
    <property type="evidence" value="ECO:0007669"/>
    <property type="project" value="UniProtKB-UniRule"/>
</dbReference>
<dbReference type="GO" id="GO:0046166">
    <property type="term" value="P:glyceraldehyde-3-phosphate biosynthetic process"/>
    <property type="evidence" value="ECO:0007669"/>
    <property type="project" value="TreeGrafter"/>
</dbReference>
<dbReference type="GO" id="GO:0019563">
    <property type="term" value="P:glycerol catabolic process"/>
    <property type="evidence" value="ECO:0007669"/>
    <property type="project" value="TreeGrafter"/>
</dbReference>
<dbReference type="GO" id="GO:0006096">
    <property type="term" value="P:glycolytic process"/>
    <property type="evidence" value="ECO:0007669"/>
    <property type="project" value="UniProtKB-UniRule"/>
</dbReference>
<dbReference type="CDD" id="cd00311">
    <property type="entry name" value="TIM"/>
    <property type="match status" value="1"/>
</dbReference>
<dbReference type="Gene3D" id="3.20.20.70">
    <property type="entry name" value="Aldolase class I"/>
    <property type="match status" value="1"/>
</dbReference>
<dbReference type="HAMAP" id="MF_00147_B">
    <property type="entry name" value="TIM_B"/>
    <property type="match status" value="1"/>
</dbReference>
<dbReference type="InterPro" id="IPR013785">
    <property type="entry name" value="Aldolase_TIM"/>
</dbReference>
<dbReference type="InterPro" id="IPR035990">
    <property type="entry name" value="TIM_sf"/>
</dbReference>
<dbReference type="InterPro" id="IPR022896">
    <property type="entry name" value="TrioseP_Isoase_bac/euk"/>
</dbReference>
<dbReference type="InterPro" id="IPR000652">
    <property type="entry name" value="Triosephosphate_isomerase"/>
</dbReference>
<dbReference type="InterPro" id="IPR020861">
    <property type="entry name" value="Triosephosphate_isomerase_AS"/>
</dbReference>
<dbReference type="NCBIfam" id="NF000728">
    <property type="entry name" value="PRK00042.3-2"/>
    <property type="match status" value="1"/>
</dbReference>
<dbReference type="PANTHER" id="PTHR21139">
    <property type="entry name" value="TRIOSEPHOSPHATE ISOMERASE"/>
    <property type="match status" value="1"/>
</dbReference>
<dbReference type="PANTHER" id="PTHR21139:SF42">
    <property type="entry name" value="TRIOSEPHOSPHATE ISOMERASE"/>
    <property type="match status" value="1"/>
</dbReference>
<dbReference type="Pfam" id="PF00121">
    <property type="entry name" value="TIM"/>
    <property type="match status" value="1"/>
</dbReference>
<dbReference type="SUPFAM" id="SSF51351">
    <property type="entry name" value="Triosephosphate isomerase (TIM)"/>
    <property type="match status" value="1"/>
</dbReference>
<dbReference type="PROSITE" id="PS00171">
    <property type="entry name" value="TIM_1"/>
    <property type="match status" value="1"/>
</dbReference>
<dbReference type="PROSITE" id="PS51440">
    <property type="entry name" value="TIM_2"/>
    <property type="match status" value="1"/>
</dbReference>
<sequence>MKFLANLKCNHTRASFAEYAKILDANLSADDDVSVFVPFTAFDAKEHKFKLGAQNFYPCVSGAFTGEIGKAQLDEFGISSVLIGHSERREILGESERLLRAKFDFAAKNGWQIIYCVGENLSVNEAGGTKEFLRTQLGNIDTGYANLIVAYEPIWAIGTGKSASAEQIAEILGFLRTLTLAPLLYGGSVNAANIGEIARIRECGGVLVGTASWDATNFLNLIASSRERI</sequence>
<proteinExistence type="inferred from homology"/>
<keyword id="KW-0963">Cytoplasm</keyword>
<keyword id="KW-0312">Gluconeogenesis</keyword>
<keyword id="KW-0324">Glycolysis</keyword>
<keyword id="KW-0413">Isomerase</keyword>
<keyword id="KW-1185">Reference proteome</keyword>
<reference key="1">
    <citation type="submission" date="2007-07" db="EMBL/GenBank/DDBJ databases">
        <title>Genome sequence of Campylobacter curvus 525.92 isolated from human feces.</title>
        <authorList>
            <person name="Fouts D.E."/>
            <person name="Mongodin E.F."/>
            <person name="Puiu D."/>
            <person name="Sebastian Y."/>
            <person name="Miller W.G."/>
            <person name="Mandrell R.E."/>
            <person name="Lastovica A.J."/>
            <person name="Nelson K.E."/>
        </authorList>
    </citation>
    <scope>NUCLEOTIDE SEQUENCE [LARGE SCALE GENOMIC DNA]</scope>
    <source>
        <strain>525.92</strain>
    </source>
</reference>
<accession>A7GWT2</accession>
<organism>
    <name type="scientific">Campylobacter curvus (strain 525.92)</name>
    <dbReference type="NCBI Taxonomy" id="360105"/>
    <lineage>
        <taxon>Bacteria</taxon>
        <taxon>Pseudomonadati</taxon>
        <taxon>Campylobacterota</taxon>
        <taxon>Epsilonproteobacteria</taxon>
        <taxon>Campylobacterales</taxon>
        <taxon>Campylobacteraceae</taxon>
        <taxon>Campylobacter</taxon>
    </lineage>
</organism>
<gene>
    <name evidence="1" type="primary">tpiA</name>
    <name type="ordered locus">Ccur92_03700</name>
    <name type="ORF">CCV52592_1247</name>
</gene>